<name>PPNP_BURM1</name>
<protein>
    <recommendedName>
        <fullName evidence="1">Pyrimidine/purine nucleoside phosphorylase</fullName>
        <ecNumber evidence="1">2.4.2.1</ecNumber>
        <ecNumber evidence="1">2.4.2.2</ecNumber>
    </recommendedName>
    <alternativeName>
        <fullName evidence="1">Adenosine phosphorylase</fullName>
    </alternativeName>
    <alternativeName>
        <fullName evidence="1">Cytidine phosphorylase</fullName>
    </alternativeName>
    <alternativeName>
        <fullName evidence="1">Guanosine phosphorylase</fullName>
    </alternativeName>
    <alternativeName>
        <fullName evidence="1">Inosine phosphorylase</fullName>
    </alternativeName>
    <alternativeName>
        <fullName evidence="1">Thymidine phosphorylase</fullName>
    </alternativeName>
    <alternativeName>
        <fullName evidence="1">Uridine phosphorylase</fullName>
    </alternativeName>
    <alternativeName>
        <fullName evidence="1">Xanthosine phosphorylase</fullName>
    </alternativeName>
</protein>
<gene>
    <name evidence="1" type="primary">ppnP</name>
    <name type="ordered locus">Bmul_4104</name>
    <name type="ordered locus">BMULJ_04400</name>
</gene>
<dbReference type="EC" id="2.4.2.1" evidence="1"/>
<dbReference type="EC" id="2.4.2.2" evidence="1"/>
<dbReference type="EMBL" id="CP000869">
    <property type="protein sequence ID" value="ABX17785.1"/>
    <property type="molecule type" value="Genomic_DNA"/>
</dbReference>
<dbReference type="EMBL" id="AP009386">
    <property type="protein sequence ID" value="BAG46255.1"/>
    <property type="molecule type" value="Genomic_DNA"/>
</dbReference>
<dbReference type="RefSeq" id="WP_012216901.1">
    <property type="nucleotide sequence ID" value="NC_010086.1"/>
</dbReference>
<dbReference type="SMR" id="A9AR64"/>
<dbReference type="STRING" id="395019.BMULJ_04400"/>
<dbReference type="KEGG" id="bmj:BMULJ_04400"/>
<dbReference type="KEGG" id="bmu:Bmul_4104"/>
<dbReference type="eggNOG" id="COG3123">
    <property type="taxonomic scope" value="Bacteria"/>
</dbReference>
<dbReference type="HOGENOM" id="CLU_157874_1_0_4"/>
<dbReference type="Proteomes" id="UP000008815">
    <property type="component" value="Chromosome 2"/>
</dbReference>
<dbReference type="GO" id="GO:0005829">
    <property type="term" value="C:cytosol"/>
    <property type="evidence" value="ECO:0007669"/>
    <property type="project" value="TreeGrafter"/>
</dbReference>
<dbReference type="GO" id="GO:0047975">
    <property type="term" value="F:guanosine phosphorylase activity"/>
    <property type="evidence" value="ECO:0007669"/>
    <property type="project" value="UniProtKB-EC"/>
</dbReference>
<dbReference type="GO" id="GO:0004731">
    <property type="term" value="F:purine-nucleoside phosphorylase activity"/>
    <property type="evidence" value="ECO:0007669"/>
    <property type="project" value="UniProtKB-UniRule"/>
</dbReference>
<dbReference type="GO" id="GO:0009032">
    <property type="term" value="F:thymidine phosphorylase activity"/>
    <property type="evidence" value="ECO:0007669"/>
    <property type="project" value="UniProtKB-EC"/>
</dbReference>
<dbReference type="GO" id="GO:0004850">
    <property type="term" value="F:uridine phosphorylase activity"/>
    <property type="evidence" value="ECO:0007669"/>
    <property type="project" value="UniProtKB-EC"/>
</dbReference>
<dbReference type="CDD" id="cd20296">
    <property type="entry name" value="cupin_PpnP-like"/>
    <property type="match status" value="1"/>
</dbReference>
<dbReference type="Gene3D" id="2.60.120.10">
    <property type="entry name" value="Jelly Rolls"/>
    <property type="match status" value="1"/>
</dbReference>
<dbReference type="HAMAP" id="MF_01537">
    <property type="entry name" value="Nucleos_phosphorylase_PpnP"/>
    <property type="match status" value="1"/>
</dbReference>
<dbReference type="InterPro" id="IPR009664">
    <property type="entry name" value="Ppnp"/>
</dbReference>
<dbReference type="InterPro" id="IPR014710">
    <property type="entry name" value="RmlC-like_jellyroll"/>
</dbReference>
<dbReference type="InterPro" id="IPR011051">
    <property type="entry name" value="RmlC_Cupin_sf"/>
</dbReference>
<dbReference type="PANTHER" id="PTHR36540">
    <property type="entry name" value="PYRIMIDINE/PURINE NUCLEOSIDE PHOSPHORYLASE"/>
    <property type="match status" value="1"/>
</dbReference>
<dbReference type="PANTHER" id="PTHR36540:SF1">
    <property type="entry name" value="PYRIMIDINE_PURINE NUCLEOSIDE PHOSPHORYLASE"/>
    <property type="match status" value="1"/>
</dbReference>
<dbReference type="Pfam" id="PF06865">
    <property type="entry name" value="Ppnp"/>
    <property type="match status" value="1"/>
</dbReference>
<dbReference type="SUPFAM" id="SSF51182">
    <property type="entry name" value="RmlC-like cupins"/>
    <property type="match status" value="1"/>
</dbReference>
<comment type="function">
    <text evidence="1">Catalyzes the phosphorolysis of diverse nucleosides, yielding D-ribose 1-phosphate and the respective free bases. Can use uridine, adenosine, guanosine, cytidine, thymidine, inosine and xanthosine as substrates. Also catalyzes the reverse reactions.</text>
</comment>
<comment type="catalytic activity">
    <reaction evidence="1">
        <text>a purine D-ribonucleoside + phosphate = a purine nucleobase + alpha-D-ribose 1-phosphate</text>
        <dbReference type="Rhea" id="RHEA:19805"/>
        <dbReference type="ChEBI" id="CHEBI:26386"/>
        <dbReference type="ChEBI" id="CHEBI:43474"/>
        <dbReference type="ChEBI" id="CHEBI:57720"/>
        <dbReference type="ChEBI" id="CHEBI:142355"/>
        <dbReference type="EC" id="2.4.2.1"/>
    </reaction>
</comment>
<comment type="catalytic activity">
    <reaction evidence="1">
        <text>adenosine + phosphate = alpha-D-ribose 1-phosphate + adenine</text>
        <dbReference type="Rhea" id="RHEA:27642"/>
        <dbReference type="ChEBI" id="CHEBI:16335"/>
        <dbReference type="ChEBI" id="CHEBI:16708"/>
        <dbReference type="ChEBI" id="CHEBI:43474"/>
        <dbReference type="ChEBI" id="CHEBI:57720"/>
        <dbReference type="EC" id="2.4.2.1"/>
    </reaction>
</comment>
<comment type="catalytic activity">
    <reaction evidence="1">
        <text>cytidine + phosphate = cytosine + alpha-D-ribose 1-phosphate</text>
        <dbReference type="Rhea" id="RHEA:52540"/>
        <dbReference type="ChEBI" id="CHEBI:16040"/>
        <dbReference type="ChEBI" id="CHEBI:17562"/>
        <dbReference type="ChEBI" id="CHEBI:43474"/>
        <dbReference type="ChEBI" id="CHEBI:57720"/>
        <dbReference type="EC" id="2.4.2.2"/>
    </reaction>
</comment>
<comment type="catalytic activity">
    <reaction evidence="1">
        <text>guanosine + phosphate = alpha-D-ribose 1-phosphate + guanine</text>
        <dbReference type="Rhea" id="RHEA:13233"/>
        <dbReference type="ChEBI" id="CHEBI:16235"/>
        <dbReference type="ChEBI" id="CHEBI:16750"/>
        <dbReference type="ChEBI" id="CHEBI:43474"/>
        <dbReference type="ChEBI" id="CHEBI:57720"/>
        <dbReference type="EC" id="2.4.2.1"/>
    </reaction>
</comment>
<comment type="catalytic activity">
    <reaction evidence="1">
        <text>inosine + phosphate = alpha-D-ribose 1-phosphate + hypoxanthine</text>
        <dbReference type="Rhea" id="RHEA:27646"/>
        <dbReference type="ChEBI" id="CHEBI:17368"/>
        <dbReference type="ChEBI" id="CHEBI:17596"/>
        <dbReference type="ChEBI" id="CHEBI:43474"/>
        <dbReference type="ChEBI" id="CHEBI:57720"/>
        <dbReference type="EC" id="2.4.2.1"/>
    </reaction>
</comment>
<comment type="catalytic activity">
    <reaction evidence="1">
        <text>thymidine + phosphate = 2-deoxy-alpha-D-ribose 1-phosphate + thymine</text>
        <dbReference type="Rhea" id="RHEA:16037"/>
        <dbReference type="ChEBI" id="CHEBI:17748"/>
        <dbReference type="ChEBI" id="CHEBI:17821"/>
        <dbReference type="ChEBI" id="CHEBI:43474"/>
        <dbReference type="ChEBI" id="CHEBI:57259"/>
        <dbReference type="EC" id="2.4.2.2"/>
    </reaction>
</comment>
<comment type="catalytic activity">
    <reaction evidence="1">
        <text>uridine + phosphate = alpha-D-ribose 1-phosphate + uracil</text>
        <dbReference type="Rhea" id="RHEA:24388"/>
        <dbReference type="ChEBI" id="CHEBI:16704"/>
        <dbReference type="ChEBI" id="CHEBI:17568"/>
        <dbReference type="ChEBI" id="CHEBI:43474"/>
        <dbReference type="ChEBI" id="CHEBI:57720"/>
        <dbReference type="EC" id="2.4.2.2"/>
    </reaction>
</comment>
<comment type="catalytic activity">
    <reaction evidence="1">
        <text>xanthosine + phosphate = alpha-D-ribose 1-phosphate + xanthine</text>
        <dbReference type="Rhea" id="RHEA:27638"/>
        <dbReference type="ChEBI" id="CHEBI:17712"/>
        <dbReference type="ChEBI" id="CHEBI:18107"/>
        <dbReference type="ChEBI" id="CHEBI:43474"/>
        <dbReference type="ChEBI" id="CHEBI:57720"/>
        <dbReference type="EC" id="2.4.2.1"/>
    </reaction>
</comment>
<comment type="similarity">
    <text evidence="1">Belongs to the nucleoside phosphorylase PpnP family.</text>
</comment>
<evidence type="ECO:0000255" key="1">
    <source>
        <dbReference type="HAMAP-Rule" id="MF_01537"/>
    </source>
</evidence>
<accession>A9AR64</accession>
<proteinExistence type="inferred from homology"/>
<keyword id="KW-0328">Glycosyltransferase</keyword>
<keyword id="KW-1185">Reference proteome</keyword>
<keyword id="KW-0808">Transferase</keyword>
<sequence length="106" mass="11574">MTSATQFDNVSVVKRANVYFDGKCVSHTVLFPDGTRKTLGVILPCALNFGTDAPELMEVQAGKCRVKLDGSDTWQTYGAGESISVPGKSRFDIEVIETLDYVCSYL</sequence>
<feature type="chain" id="PRO_1000198651" description="Pyrimidine/purine nucleoside phosphorylase">
    <location>
        <begin position="1"/>
        <end position="106"/>
    </location>
</feature>
<organism>
    <name type="scientific">Burkholderia multivorans (strain ATCC 17616 / 249)</name>
    <dbReference type="NCBI Taxonomy" id="395019"/>
    <lineage>
        <taxon>Bacteria</taxon>
        <taxon>Pseudomonadati</taxon>
        <taxon>Pseudomonadota</taxon>
        <taxon>Betaproteobacteria</taxon>
        <taxon>Burkholderiales</taxon>
        <taxon>Burkholderiaceae</taxon>
        <taxon>Burkholderia</taxon>
        <taxon>Burkholderia cepacia complex</taxon>
    </lineage>
</organism>
<reference key="1">
    <citation type="submission" date="2007-10" db="EMBL/GenBank/DDBJ databases">
        <title>Complete sequence of chromosome 2 of Burkholderia multivorans ATCC 17616.</title>
        <authorList>
            <person name="Copeland A."/>
            <person name="Lucas S."/>
            <person name="Lapidus A."/>
            <person name="Barry K."/>
            <person name="Glavina del Rio T."/>
            <person name="Dalin E."/>
            <person name="Tice H."/>
            <person name="Pitluck S."/>
            <person name="Chain P."/>
            <person name="Malfatti S."/>
            <person name="Shin M."/>
            <person name="Vergez L."/>
            <person name="Schmutz J."/>
            <person name="Larimer F."/>
            <person name="Land M."/>
            <person name="Hauser L."/>
            <person name="Kyrpides N."/>
            <person name="Kim E."/>
            <person name="Tiedje J."/>
            <person name="Richardson P."/>
        </authorList>
    </citation>
    <scope>NUCLEOTIDE SEQUENCE [LARGE SCALE GENOMIC DNA]</scope>
    <source>
        <strain>ATCC 17616 / 249</strain>
    </source>
</reference>
<reference key="2">
    <citation type="submission" date="2007-04" db="EMBL/GenBank/DDBJ databases">
        <title>Complete genome sequence of Burkholderia multivorans ATCC 17616.</title>
        <authorList>
            <person name="Ohtsubo Y."/>
            <person name="Yamashita A."/>
            <person name="Kurokawa K."/>
            <person name="Takami H."/>
            <person name="Yuhara S."/>
            <person name="Nishiyama E."/>
            <person name="Endo R."/>
            <person name="Miyazaki R."/>
            <person name="Ono A."/>
            <person name="Yano K."/>
            <person name="Ito M."/>
            <person name="Sota M."/>
            <person name="Yuji N."/>
            <person name="Hattori M."/>
            <person name="Tsuda M."/>
        </authorList>
    </citation>
    <scope>NUCLEOTIDE SEQUENCE [LARGE SCALE GENOMIC DNA]</scope>
    <source>
        <strain>ATCC 17616 / 249</strain>
    </source>
</reference>